<evidence type="ECO:0000255" key="1">
    <source>
        <dbReference type="HAMAP-Rule" id="MF_00051"/>
    </source>
</evidence>
<sequence>MNHLKRQDEKVFAAIEAELGRQRSKIELIASENFVSEAVMEAQGSVLTNKYAEGYPGKRYYGGCEHVDVVEDIARDRAKEIFGAEHVNVQPHSGAQANMAVYFTILEQGDTVLGMNLSHGGHLTHGSPVNFSGVQYNFVEYGVDAESHRINYDDVLAKAKEHKPKLIVAGASAYPRVIDFKRFREIADEVGAYFMVDMAHIAGLVAAGLHPNPVPHAHFVTTTTHKTLRGPRGGMILCEEQFAKQIDKSIFPGIQGGPLMHVIAAKAVAFGETLQDEFKTYAQHIINNANRLAEGLQKEGLTLVSGGTDNHLILIDVRNLEITGKVAEHVLDEVGITVNKNTIPFETASPFVTSGVRIGTAAVTSRGFGLEEMDEIAALIAYTLKNHENEVALEEASKRVEALTSKFSMYTDL</sequence>
<protein>
    <recommendedName>
        <fullName evidence="1">Serine hydroxymethyltransferase</fullName>
        <shortName evidence="1">SHMT</shortName>
        <shortName evidence="1">Serine methylase</shortName>
        <ecNumber evidence="1">2.1.2.1</ecNumber>
    </recommendedName>
</protein>
<organism>
    <name type="scientific">Bacillus mycoides (strain KBAB4)</name>
    <name type="common">Bacillus weihenstephanensis</name>
    <dbReference type="NCBI Taxonomy" id="315730"/>
    <lineage>
        <taxon>Bacteria</taxon>
        <taxon>Bacillati</taxon>
        <taxon>Bacillota</taxon>
        <taxon>Bacilli</taxon>
        <taxon>Bacillales</taxon>
        <taxon>Bacillaceae</taxon>
        <taxon>Bacillus</taxon>
        <taxon>Bacillus cereus group</taxon>
    </lineage>
</organism>
<proteinExistence type="inferred from homology"/>
<dbReference type="EC" id="2.1.2.1" evidence="1"/>
<dbReference type="EMBL" id="CP000903">
    <property type="protein sequence ID" value="ABY46260.1"/>
    <property type="molecule type" value="Genomic_DNA"/>
</dbReference>
<dbReference type="RefSeq" id="WP_002143868.1">
    <property type="nucleotide sequence ID" value="NC_010184.1"/>
</dbReference>
<dbReference type="SMR" id="A9VSB4"/>
<dbReference type="GeneID" id="66265128"/>
<dbReference type="KEGG" id="bwe:BcerKBAB4_5114"/>
<dbReference type="eggNOG" id="COG0112">
    <property type="taxonomic scope" value="Bacteria"/>
</dbReference>
<dbReference type="HOGENOM" id="CLU_022477_2_1_9"/>
<dbReference type="UniPathway" id="UPA00193"/>
<dbReference type="UniPathway" id="UPA00288">
    <property type="reaction ID" value="UER01023"/>
</dbReference>
<dbReference type="Proteomes" id="UP000002154">
    <property type="component" value="Chromosome"/>
</dbReference>
<dbReference type="GO" id="GO:0005829">
    <property type="term" value="C:cytosol"/>
    <property type="evidence" value="ECO:0007669"/>
    <property type="project" value="TreeGrafter"/>
</dbReference>
<dbReference type="GO" id="GO:0004372">
    <property type="term" value="F:glycine hydroxymethyltransferase activity"/>
    <property type="evidence" value="ECO:0007669"/>
    <property type="project" value="UniProtKB-UniRule"/>
</dbReference>
<dbReference type="GO" id="GO:0030170">
    <property type="term" value="F:pyridoxal phosphate binding"/>
    <property type="evidence" value="ECO:0007669"/>
    <property type="project" value="UniProtKB-UniRule"/>
</dbReference>
<dbReference type="GO" id="GO:0019264">
    <property type="term" value="P:glycine biosynthetic process from serine"/>
    <property type="evidence" value="ECO:0007669"/>
    <property type="project" value="UniProtKB-UniRule"/>
</dbReference>
<dbReference type="GO" id="GO:0035999">
    <property type="term" value="P:tetrahydrofolate interconversion"/>
    <property type="evidence" value="ECO:0007669"/>
    <property type="project" value="UniProtKB-UniRule"/>
</dbReference>
<dbReference type="CDD" id="cd00378">
    <property type="entry name" value="SHMT"/>
    <property type="match status" value="1"/>
</dbReference>
<dbReference type="FunFam" id="3.40.640.10:FF:000001">
    <property type="entry name" value="Serine hydroxymethyltransferase"/>
    <property type="match status" value="1"/>
</dbReference>
<dbReference type="FunFam" id="3.90.1150.10:FF:000003">
    <property type="entry name" value="Serine hydroxymethyltransferase"/>
    <property type="match status" value="1"/>
</dbReference>
<dbReference type="Gene3D" id="3.90.1150.10">
    <property type="entry name" value="Aspartate Aminotransferase, domain 1"/>
    <property type="match status" value="1"/>
</dbReference>
<dbReference type="Gene3D" id="3.40.640.10">
    <property type="entry name" value="Type I PLP-dependent aspartate aminotransferase-like (Major domain)"/>
    <property type="match status" value="1"/>
</dbReference>
<dbReference type="HAMAP" id="MF_00051">
    <property type="entry name" value="SHMT"/>
    <property type="match status" value="1"/>
</dbReference>
<dbReference type="InterPro" id="IPR015424">
    <property type="entry name" value="PyrdxlP-dep_Trfase"/>
</dbReference>
<dbReference type="InterPro" id="IPR015421">
    <property type="entry name" value="PyrdxlP-dep_Trfase_major"/>
</dbReference>
<dbReference type="InterPro" id="IPR015422">
    <property type="entry name" value="PyrdxlP-dep_Trfase_small"/>
</dbReference>
<dbReference type="InterPro" id="IPR001085">
    <property type="entry name" value="Ser_HO-MeTrfase"/>
</dbReference>
<dbReference type="InterPro" id="IPR049943">
    <property type="entry name" value="Ser_HO-MeTrfase-like"/>
</dbReference>
<dbReference type="InterPro" id="IPR019798">
    <property type="entry name" value="Ser_HO-MeTrfase_PLP_BS"/>
</dbReference>
<dbReference type="InterPro" id="IPR039429">
    <property type="entry name" value="SHMT-like_dom"/>
</dbReference>
<dbReference type="NCBIfam" id="NF000586">
    <property type="entry name" value="PRK00011.1"/>
    <property type="match status" value="1"/>
</dbReference>
<dbReference type="PANTHER" id="PTHR11680">
    <property type="entry name" value="SERINE HYDROXYMETHYLTRANSFERASE"/>
    <property type="match status" value="1"/>
</dbReference>
<dbReference type="PANTHER" id="PTHR11680:SF35">
    <property type="entry name" value="SERINE HYDROXYMETHYLTRANSFERASE 1"/>
    <property type="match status" value="1"/>
</dbReference>
<dbReference type="Pfam" id="PF00464">
    <property type="entry name" value="SHMT"/>
    <property type="match status" value="1"/>
</dbReference>
<dbReference type="PIRSF" id="PIRSF000412">
    <property type="entry name" value="SHMT"/>
    <property type="match status" value="1"/>
</dbReference>
<dbReference type="SUPFAM" id="SSF53383">
    <property type="entry name" value="PLP-dependent transferases"/>
    <property type="match status" value="1"/>
</dbReference>
<dbReference type="PROSITE" id="PS00096">
    <property type="entry name" value="SHMT"/>
    <property type="match status" value="1"/>
</dbReference>
<gene>
    <name evidence="1" type="primary">glyA</name>
    <name type="ordered locus">BcerKBAB4_5114</name>
</gene>
<accession>A9VSB4</accession>
<feature type="chain" id="PRO_1000091517" description="Serine hydroxymethyltransferase">
    <location>
        <begin position="1"/>
        <end position="413"/>
    </location>
</feature>
<feature type="binding site" evidence="1">
    <location>
        <position position="117"/>
    </location>
    <ligand>
        <name>(6S)-5,6,7,8-tetrahydrofolate</name>
        <dbReference type="ChEBI" id="CHEBI:57453"/>
    </ligand>
</feature>
<feature type="binding site" evidence="1">
    <location>
        <begin position="121"/>
        <end position="123"/>
    </location>
    <ligand>
        <name>(6S)-5,6,7,8-tetrahydrofolate</name>
        <dbReference type="ChEBI" id="CHEBI:57453"/>
    </ligand>
</feature>
<feature type="binding site" evidence="1">
    <location>
        <position position="239"/>
    </location>
    <ligand>
        <name>(6S)-5,6,7,8-tetrahydrofolate</name>
        <dbReference type="ChEBI" id="CHEBI:57453"/>
    </ligand>
</feature>
<feature type="binding site" evidence="1">
    <location>
        <begin position="349"/>
        <end position="351"/>
    </location>
    <ligand>
        <name>(6S)-5,6,7,8-tetrahydrofolate</name>
        <dbReference type="ChEBI" id="CHEBI:57453"/>
    </ligand>
</feature>
<feature type="site" description="Plays an important role in substrate specificity" evidence="1">
    <location>
        <position position="225"/>
    </location>
</feature>
<feature type="modified residue" description="N6-(pyridoxal phosphate)lysine" evidence="1">
    <location>
        <position position="226"/>
    </location>
</feature>
<comment type="function">
    <text evidence="1">Catalyzes the reversible interconversion of serine and glycine with tetrahydrofolate (THF) serving as the one-carbon carrier. This reaction serves as the major source of one-carbon groups required for the biosynthesis of purines, thymidylate, methionine, and other important biomolecules. Also exhibits THF-independent aldolase activity toward beta-hydroxyamino acids, producing glycine and aldehydes, via a retro-aldol mechanism.</text>
</comment>
<comment type="catalytic activity">
    <reaction evidence="1">
        <text>(6R)-5,10-methylene-5,6,7,8-tetrahydrofolate + glycine + H2O = (6S)-5,6,7,8-tetrahydrofolate + L-serine</text>
        <dbReference type="Rhea" id="RHEA:15481"/>
        <dbReference type="ChEBI" id="CHEBI:15377"/>
        <dbReference type="ChEBI" id="CHEBI:15636"/>
        <dbReference type="ChEBI" id="CHEBI:33384"/>
        <dbReference type="ChEBI" id="CHEBI:57305"/>
        <dbReference type="ChEBI" id="CHEBI:57453"/>
        <dbReference type="EC" id="2.1.2.1"/>
    </reaction>
</comment>
<comment type="cofactor">
    <cofactor evidence="1">
        <name>pyridoxal 5'-phosphate</name>
        <dbReference type="ChEBI" id="CHEBI:597326"/>
    </cofactor>
</comment>
<comment type="pathway">
    <text evidence="1">One-carbon metabolism; tetrahydrofolate interconversion.</text>
</comment>
<comment type="pathway">
    <text evidence="1">Amino-acid biosynthesis; glycine biosynthesis; glycine from L-serine: step 1/1.</text>
</comment>
<comment type="subunit">
    <text evidence="1">Homodimer.</text>
</comment>
<comment type="subcellular location">
    <subcellularLocation>
        <location evidence="1">Cytoplasm</location>
    </subcellularLocation>
</comment>
<comment type="similarity">
    <text evidence="1">Belongs to the SHMT family.</text>
</comment>
<name>GLYA_BACMK</name>
<keyword id="KW-0028">Amino-acid biosynthesis</keyword>
<keyword id="KW-0963">Cytoplasm</keyword>
<keyword id="KW-0554">One-carbon metabolism</keyword>
<keyword id="KW-0663">Pyridoxal phosphate</keyword>
<keyword id="KW-0808">Transferase</keyword>
<reference key="1">
    <citation type="journal article" date="2008" name="Chem. Biol. Interact.">
        <title>Extending the Bacillus cereus group genomics to putative food-borne pathogens of different toxicity.</title>
        <authorList>
            <person name="Lapidus A."/>
            <person name="Goltsman E."/>
            <person name="Auger S."/>
            <person name="Galleron N."/>
            <person name="Segurens B."/>
            <person name="Dossat C."/>
            <person name="Land M.L."/>
            <person name="Broussolle V."/>
            <person name="Brillard J."/>
            <person name="Guinebretiere M.-H."/>
            <person name="Sanchis V."/>
            <person name="Nguen-the C."/>
            <person name="Lereclus D."/>
            <person name="Richardson P."/>
            <person name="Wincker P."/>
            <person name="Weissenbach J."/>
            <person name="Ehrlich S.D."/>
            <person name="Sorokin A."/>
        </authorList>
    </citation>
    <scope>NUCLEOTIDE SEQUENCE [LARGE SCALE GENOMIC DNA]</scope>
    <source>
        <strain>KBAB4</strain>
    </source>
</reference>